<evidence type="ECO:0000250" key="1"/>
<evidence type="ECO:0000250" key="2">
    <source>
        <dbReference type="UniProtKB" id="P00157"/>
    </source>
</evidence>
<evidence type="ECO:0000255" key="3">
    <source>
        <dbReference type="PROSITE-ProRule" id="PRU00967"/>
    </source>
</evidence>
<evidence type="ECO:0000255" key="4">
    <source>
        <dbReference type="PROSITE-ProRule" id="PRU00968"/>
    </source>
</evidence>
<protein>
    <recommendedName>
        <fullName>Cytochrome b</fullName>
    </recommendedName>
    <alternativeName>
        <fullName>Complex III subunit 3</fullName>
    </alternativeName>
    <alternativeName>
        <fullName>Complex III subunit III</fullName>
    </alternativeName>
    <alternativeName>
        <fullName>Cytochrome b-c1 complex subunit 3</fullName>
    </alternativeName>
    <alternativeName>
        <fullName>Ubiquinol-cytochrome-c reductase complex cytochrome b subunit</fullName>
    </alternativeName>
</protein>
<proteinExistence type="inferred from homology"/>
<sequence length="381" mass="42716">MINLRKTHPLMKIINHSFIDLPAPSNISAWWNFGSLLGACLIIQILTGFFLAMHYTSDTLTAFSSVAHICRDVNYGWLIRNLHANGASMFFMCLFLHVGRGIYYGSYLYKETWNIGVILLLTVMATAFVGYVLPWGQMSFWGATVITNLLSAIPYIGTTLAEWIWGGFAVDKATLTRFFAFHFILPFIITALALVHLSFLHETGSNNPTGVNPDSDKIPFHPYYTIKDVLGVVLLLLTLLLLALFSPDSLGDPDNFSPANPLNTPPHIKPEWYFLFAYAILRSIPNKLGGVLALLASILILLIIPLLHTANQRSMTFRPVSQTLFWILVANLITLTWIGGQPVEQPYIIIGQLASMSYFLLILVLMPLAGMFENYMLKPKW</sequence>
<dbReference type="EMBL" id="M99455">
    <property type="protein sequence ID" value="AAC37334.1"/>
    <property type="molecule type" value="Genomic_DNA"/>
</dbReference>
<dbReference type="SMR" id="Q35020"/>
<dbReference type="GO" id="GO:0005743">
    <property type="term" value="C:mitochondrial inner membrane"/>
    <property type="evidence" value="ECO:0007669"/>
    <property type="project" value="UniProtKB-SubCell"/>
</dbReference>
<dbReference type="GO" id="GO:0045275">
    <property type="term" value="C:respiratory chain complex III"/>
    <property type="evidence" value="ECO:0007669"/>
    <property type="project" value="InterPro"/>
</dbReference>
<dbReference type="GO" id="GO:0046872">
    <property type="term" value="F:metal ion binding"/>
    <property type="evidence" value="ECO:0007669"/>
    <property type="project" value="UniProtKB-KW"/>
</dbReference>
<dbReference type="GO" id="GO:0008121">
    <property type="term" value="F:ubiquinol-cytochrome-c reductase activity"/>
    <property type="evidence" value="ECO:0007669"/>
    <property type="project" value="InterPro"/>
</dbReference>
<dbReference type="GO" id="GO:0006122">
    <property type="term" value="P:mitochondrial electron transport, ubiquinol to cytochrome c"/>
    <property type="evidence" value="ECO:0007669"/>
    <property type="project" value="TreeGrafter"/>
</dbReference>
<dbReference type="CDD" id="cd00290">
    <property type="entry name" value="cytochrome_b_C"/>
    <property type="match status" value="1"/>
</dbReference>
<dbReference type="CDD" id="cd00284">
    <property type="entry name" value="Cytochrome_b_N"/>
    <property type="match status" value="1"/>
</dbReference>
<dbReference type="FunFam" id="1.20.810.10:FF:000002">
    <property type="entry name" value="Cytochrome b"/>
    <property type="match status" value="1"/>
</dbReference>
<dbReference type="Gene3D" id="1.20.810.10">
    <property type="entry name" value="Cytochrome Bc1 Complex, Chain C"/>
    <property type="match status" value="1"/>
</dbReference>
<dbReference type="InterPro" id="IPR005798">
    <property type="entry name" value="Cyt_b/b6_C"/>
</dbReference>
<dbReference type="InterPro" id="IPR036150">
    <property type="entry name" value="Cyt_b/b6_C_sf"/>
</dbReference>
<dbReference type="InterPro" id="IPR005797">
    <property type="entry name" value="Cyt_b/b6_N"/>
</dbReference>
<dbReference type="InterPro" id="IPR027387">
    <property type="entry name" value="Cytb/b6-like_sf"/>
</dbReference>
<dbReference type="InterPro" id="IPR030689">
    <property type="entry name" value="Cytochrome_b"/>
</dbReference>
<dbReference type="InterPro" id="IPR048260">
    <property type="entry name" value="Cytochrome_b_C_euk/bac"/>
</dbReference>
<dbReference type="InterPro" id="IPR048259">
    <property type="entry name" value="Cytochrome_b_N_euk/bac"/>
</dbReference>
<dbReference type="InterPro" id="IPR016174">
    <property type="entry name" value="Di-haem_cyt_TM"/>
</dbReference>
<dbReference type="PANTHER" id="PTHR19271">
    <property type="entry name" value="CYTOCHROME B"/>
    <property type="match status" value="1"/>
</dbReference>
<dbReference type="PANTHER" id="PTHR19271:SF16">
    <property type="entry name" value="CYTOCHROME B"/>
    <property type="match status" value="1"/>
</dbReference>
<dbReference type="Pfam" id="PF00032">
    <property type="entry name" value="Cytochrom_B_C"/>
    <property type="match status" value="1"/>
</dbReference>
<dbReference type="Pfam" id="PF00033">
    <property type="entry name" value="Cytochrome_B"/>
    <property type="match status" value="1"/>
</dbReference>
<dbReference type="PIRSF" id="PIRSF038885">
    <property type="entry name" value="COB"/>
    <property type="match status" value="1"/>
</dbReference>
<dbReference type="SUPFAM" id="SSF81648">
    <property type="entry name" value="a domain/subunit of cytochrome bc1 complex (Ubiquinol-cytochrome c reductase)"/>
    <property type="match status" value="1"/>
</dbReference>
<dbReference type="SUPFAM" id="SSF81342">
    <property type="entry name" value="Transmembrane di-heme cytochromes"/>
    <property type="match status" value="1"/>
</dbReference>
<dbReference type="PROSITE" id="PS51003">
    <property type="entry name" value="CYTB_CTER"/>
    <property type="match status" value="1"/>
</dbReference>
<dbReference type="PROSITE" id="PS51002">
    <property type="entry name" value="CYTB_NTER"/>
    <property type="match status" value="1"/>
</dbReference>
<reference key="1">
    <citation type="journal article" date="1992" name="Proc. R. Soc. B">
        <title>Phylogenetic relationships of the thylacine (Mammalia: Thylacinidae) among dasyuroid marsupials: evidence from cytochrome b DNA sequences.</title>
        <authorList>
            <person name="Krajewski C."/>
            <person name="Driskell A.C."/>
            <person name="Baverstock P.R."/>
            <person name="Braun M.J."/>
        </authorList>
    </citation>
    <scope>NUCLEOTIDE SEQUENCE [GENOMIC DNA]</scope>
    <source>
        <strain>Isolate LTU 19</strain>
    </source>
</reference>
<feature type="chain" id="PRO_0000061217" description="Cytochrome b">
    <location>
        <begin position="1"/>
        <end position="381"/>
    </location>
</feature>
<feature type="transmembrane region" description="Helical" evidence="2">
    <location>
        <begin position="33"/>
        <end position="53"/>
    </location>
</feature>
<feature type="transmembrane region" description="Helical" evidence="2">
    <location>
        <begin position="77"/>
        <end position="98"/>
    </location>
</feature>
<feature type="transmembrane region" description="Helical" evidence="2">
    <location>
        <begin position="113"/>
        <end position="133"/>
    </location>
</feature>
<feature type="transmembrane region" description="Helical" evidence="2">
    <location>
        <begin position="178"/>
        <end position="198"/>
    </location>
</feature>
<feature type="transmembrane region" description="Helical" evidence="2">
    <location>
        <begin position="226"/>
        <end position="246"/>
    </location>
</feature>
<feature type="transmembrane region" description="Helical" evidence="2">
    <location>
        <begin position="288"/>
        <end position="308"/>
    </location>
</feature>
<feature type="transmembrane region" description="Helical" evidence="2">
    <location>
        <begin position="320"/>
        <end position="340"/>
    </location>
</feature>
<feature type="transmembrane region" description="Helical" evidence="2">
    <location>
        <begin position="347"/>
        <end position="367"/>
    </location>
</feature>
<feature type="binding site" description="axial binding residue" evidence="2">
    <location>
        <position position="83"/>
    </location>
    <ligand>
        <name>heme b</name>
        <dbReference type="ChEBI" id="CHEBI:60344"/>
        <label>b562</label>
    </ligand>
    <ligandPart>
        <name>Fe</name>
        <dbReference type="ChEBI" id="CHEBI:18248"/>
    </ligandPart>
</feature>
<feature type="binding site" description="axial binding residue" evidence="2">
    <location>
        <position position="97"/>
    </location>
    <ligand>
        <name>heme b</name>
        <dbReference type="ChEBI" id="CHEBI:60344"/>
        <label>b566</label>
    </ligand>
    <ligandPart>
        <name>Fe</name>
        <dbReference type="ChEBI" id="CHEBI:18248"/>
    </ligandPart>
</feature>
<feature type="binding site" description="axial binding residue" evidence="2">
    <location>
        <position position="182"/>
    </location>
    <ligand>
        <name>heme b</name>
        <dbReference type="ChEBI" id="CHEBI:60344"/>
        <label>b562</label>
    </ligand>
    <ligandPart>
        <name>Fe</name>
        <dbReference type="ChEBI" id="CHEBI:18248"/>
    </ligandPart>
</feature>
<feature type="binding site" description="axial binding residue" evidence="2">
    <location>
        <position position="196"/>
    </location>
    <ligand>
        <name>heme b</name>
        <dbReference type="ChEBI" id="CHEBI:60344"/>
        <label>b566</label>
    </ligand>
    <ligandPart>
        <name>Fe</name>
        <dbReference type="ChEBI" id="CHEBI:18248"/>
    </ligandPart>
</feature>
<feature type="binding site" evidence="2">
    <location>
        <position position="201"/>
    </location>
    <ligand>
        <name>a ubiquinone</name>
        <dbReference type="ChEBI" id="CHEBI:16389"/>
    </ligand>
</feature>
<keyword id="KW-0249">Electron transport</keyword>
<keyword id="KW-0349">Heme</keyword>
<keyword id="KW-0408">Iron</keyword>
<keyword id="KW-0472">Membrane</keyword>
<keyword id="KW-0479">Metal-binding</keyword>
<keyword id="KW-0496">Mitochondrion</keyword>
<keyword id="KW-0999">Mitochondrion inner membrane</keyword>
<keyword id="KW-0679">Respiratory chain</keyword>
<keyword id="KW-0812">Transmembrane</keyword>
<keyword id="KW-1133">Transmembrane helix</keyword>
<keyword id="KW-0813">Transport</keyword>
<keyword id="KW-0830">Ubiquinone</keyword>
<geneLocation type="mitochondrion"/>
<accession>Q35020</accession>
<name>CYB_MURLO</name>
<comment type="function">
    <text evidence="2">Component of the ubiquinol-cytochrome c reductase complex (complex III or cytochrome b-c1 complex) that is part of the mitochondrial respiratory chain. The b-c1 complex mediates electron transfer from ubiquinol to cytochrome c. Contributes to the generation of a proton gradient across the mitochondrial membrane that is then used for ATP synthesis.</text>
</comment>
<comment type="cofactor">
    <cofactor evidence="2">
        <name>heme b</name>
        <dbReference type="ChEBI" id="CHEBI:60344"/>
    </cofactor>
    <text evidence="2">Binds 2 heme b groups non-covalently.</text>
</comment>
<comment type="subunit">
    <text evidence="2">The cytochrome bc1 complex contains 11 subunits: 3 respiratory subunits (MT-CYB, CYC1 and UQCRFS1), 2 core proteins (UQCRC1 and UQCRC2) and 6 low-molecular weight proteins (UQCRH/QCR6, UQCRB/QCR7, UQCRQ/QCR8, UQCR10/QCR9, UQCR11/QCR10 and a cleavage product of UQCRFS1). This cytochrome bc1 complex then forms a dimer.</text>
</comment>
<comment type="subcellular location">
    <subcellularLocation>
        <location evidence="2">Mitochondrion inner membrane</location>
        <topology evidence="2">Multi-pass membrane protein</topology>
    </subcellularLocation>
</comment>
<comment type="miscellaneous">
    <text evidence="1">Heme 1 (or BL or b562) is low-potential and absorbs at about 562 nm, and heme 2 (or BH or b566) is high-potential and absorbs at about 566 nm.</text>
</comment>
<comment type="similarity">
    <text evidence="3 4">Belongs to the cytochrome b family.</text>
</comment>
<comment type="caution">
    <text evidence="2">The full-length protein contains only eight transmembrane helices, not nine as predicted by bioinformatics tools.</text>
</comment>
<gene>
    <name type="primary">MT-CYB</name>
    <name type="synonym">COB</name>
    <name type="synonym">CYTB</name>
    <name type="synonym">MTCYB</name>
</gene>
<organism>
    <name type="scientific">Murexia longicaudata</name>
    <name type="common">Short-furred dasyure</name>
    <dbReference type="NCBI Taxonomy" id="37736"/>
    <lineage>
        <taxon>Eukaryota</taxon>
        <taxon>Metazoa</taxon>
        <taxon>Chordata</taxon>
        <taxon>Craniata</taxon>
        <taxon>Vertebrata</taxon>
        <taxon>Euteleostomi</taxon>
        <taxon>Mammalia</taxon>
        <taxon>Metatheria</taxon>
        <taxon>Dasyuromorphia</taxon>
        <taxon>Dasyuridae</taxon>
        <taxon>Murexia</taxon>
    </lineage>
</organism>